<accession>Q1JM65</accession>
<dbReference type="EC" id="4.1.1.23" evidence="1"/>
<dbReference type="EMBL" id="CP000259">
    <property type="protein sequence ID" value="ABF31947.1"/>
    <property type="molecule type" value="Genomic_DNA"/>
</dbReference>
<dbReference type="RefSeq" id="WP_002990139.1">
    <property type="nucleotide sequence ID" value="NC_008021.1"/>
</dbReference>
<dbReference type="SMR" id="Q1JM65"/>
<dbReference type="GeneID" id="69900998"/>
<dbReference type="KEGG" id="spk:MGAS9429_Spy0759"/>
<dbReference type="HOGENOM" id="CLU_067069_1_1_9"/>
<dbReference type="UniPathway" id="UPA00070">
    <property type="reaction ID" value="UER00120"/>
</dbReference>
<dbReference type="Proteomes" id="UP000002433">
    <property type="component" value="Chromosome"/>
</dbReference>
<dbReference type="GO" id="GO:0005829">
    <property type="term" value="C:cytosol"/>
    <property type="evidence" value="ECO:0007669"/>
    <property type="project" value="TreeGrafter"/>
</dbReference>
<dbReference type="GO" id="GO:0004590">
    <property type="term" value="F:orotidine-5'-phosphate decarboxylase activity"/>
    <property type="evidence" value="ECO:0007669"/>
    <property type="project" value="UniProtKB-UniRule"/>
</dbReference>
<dbReference type="GO" id="GO:0006207">
    <property type="term" value="P:'de novo' pyrimidine nucleobase biosynthetic process"/>
    <property type="evidence" value="ECO:0007669"/>
    <property type="project" value="InterPro"/>
</dbReference>
<dbReference type="GO" id="GO:0044205">
    <property type="term" value="P:'de novo' UMP biosynthetic process"/>
    <property type="evidence" value="ECO:0007669"/>
    <property type="project" value="UniProtKB-UniRule"/>
</dbReference>
<dbReference type="CDD" id="cd04725">
    <property type="entry name" value="OMP_decarboxylase_like"/>
    <property type="match status" value="1"/>
</dbReference>
<dbReference type="FunFam" id="3.20.20.70:FF:000015">
    <property type="entry name" value="Orotidine 5'-phosphate decarboxylase"/>
    <property type="match status" value="1"/>
</dbReference>
<dbReference type="Gene3D" id="3.20.20.70">
    <property type="entry name" value="Aldolase class I"/>
    <property type="match status" value="1"/>
</dbReference>
<dbReference type="HAMAP" id="MF_01200_B">
    <property type="entry name" value="OMPdecase_type1_B"/>
    <property type="match status" value="1"/>
</dbReference>
<dbReference type="InterPro" id="IPR013785">
    <property type="entry name" value="Aldolase_TIM"/>
</dbReference>
<dbReference type="InterPro" id="IPR014732">
    <property type="entry name" value="OMPdecase"/>
</dbReference>
<dbReference type="InterPro" id="IPR018089">
    <property type="entry name" value="OMPdecase_AS"/>
</dbReference>
<dbReference type="InterPro" id="IPR047596">
    <property type="entry name" value="OMPdecase_bac"/>
</dbReference>
<dbReference type="InterPro" id="IPR001754">
    <property type="entry name" value="OMPdeCOase_dom"/>
</dbReference>
<dbReference type="InterPro" id="IPR011060">
    <property type="entry name" value="RibuloseP-bd_barrel"/>
</dbReference>
<dbReference type="NCBIfam" id="NF001273">
    <property type="entry name" value="PRK00230.1"/>
    <property type="match status" value="1"/>
</dbReference>
<dbReference type="NCBIfam" id="TIGR01740">
    <property type="entry name" value="pyrF"/>
    <property type="match status" value="1"/>
</dbReference>
<dbReference type="PANTHER" id="PTHR32119">
    <property type="entry name" value="OROTIDINE 5'-PHOSPHATE DECARBOXYLASE"/>
    <property type="match status" value="1"/>
</dbReference>
<dbReference type="PANTHER" id="PTHR32119:SF2">
    <property type="entry name" value="OROTIDINE 5'-PHOSPHATE DECARBOXYLASE"/>
    <property type="match status" value="1"/>
</dbReference>
<dbReference type="Pfam" id="PF00215">
    <property type="entry name" value="OMPdecase"/>
    <property type="match status" value="1"/>
</dbReference>
<dbReference type="SMART" id="SM00934">
    <property type="entry name" value="OMPdecase"/>
    <property type="match status" value="1"/>
</dbReference>
<dbReference type="SUPFAM" id="SSF51366">
    <property type="entry name" value="Ribulose-phoshate binding barrel"/>
    <property type="match status" value="1"/>
</dbReference>
<dbReference type="PROSITE" id="PS00156">
    <property type="entry name" value="OMPDECASE"/>
    <property type="match status" value="1"/>
</dbReference>
<feature type="chain" id="PRO_1000065947" description="Orotidine 5'-phosphate decarboxylase">
    <location>
        <begin position="1"/>
        <end position="230"/>
    </location>
</feature>
<feature type="active site" description="Proton donor" evidence="1">
    <location>
        <position position="63"/>
    </location>
</feature>
<feature type="binding site" evidence="1">
    <location>
        <position position="11"/>
    </location>
    <ligand>
        <name>substrate</name>
    </ligand>
</feature>
<feature type="binding site" evidence="1">
    <location>
        <position position="34"/>
    </location>
    <ligand>
        <name>substrate</name>
    </ligand>
</feature>
<feature type="binding site" evidence="1">
    <location>
        <begin position="61"/>
        <end position="70"/>
    </location>
    <ligand>
        <name>substrate</name>
    </ligand>
</feature>
<feature type="binding site" evidence="1">
    <location>
        <position position="117"/>
    </location>
    <ligand>
        <name>substrate</name>
    </ligand>
</feature>
<feature type="binding site" evidence="1">
    <location>
        <position position="179"/>
    </location>
    <ligand>
        <name>substrate</name>
    </ligand>
</feature>
<feature type="binding site" evidence="1">
    <location>
        <position position="188"/>
    </location>
    <ligand>
        <name>substrate</name>
    </ligand>
</feature>
<feature type="binding site" evidence="1">
    <location>
        <position position="208"/>
    </location>
    <ligand>
        <name>substrate</name>
    </ligand>
</feature>
<feature type="binding site" evidence="1">
    <location>
        <position position="209"/>
    </location>
    <ligand>
        <name>substrate</name>
    </ligand>
</feature>
<proteinExistence type="inferred from homology"/>
<reference key="1">
    <citation type="journal article" date="2006" name="Proc. Natl. Acad. Sci. U.S.A.">
        <title>Molecular genetic anatomy of inter- and intraserotype variation in the human bacterial pathogen group A Streptococcus.</title>
        <authorList>
            <person name="Beres S.B."/>
            <person name="Richter E.W."/>
            <person name="Nagiec M.J."/>
            <person name="Sumby P."/>
            <person name="Porcella S.F."/>
            <person name="DeLeo F.R."/>
            <person name="Musser J.M."/>
        </authorList>
    </citation>
    <scope>NUCLEOTIDE SEQUENCE [LARGE SCALE GENOMIC DNA]</scope>
    <source>
        <strain>MGAS9429</strain>
    </source>
</reference>
<gene>
    <name evidence="1" type="primary">pyrF</name>
    <name type="ordered locus">MGAS9429_Spy0759</name>
</gene>
<evidence type="ECO:0000255" key="1">
    <source>
        <dbReference type="HAMAP-Rule" id="MF_01200"/>
    </source>
</evidence>
<organism>
    <name type="scientific">Streptococcus pyogenes serotype M12 (strain MGAS9429)</name>
    <dbReference type="NCBI Taxonomy" id="370551"/>
    <lineage>
        <taxon>Bacteria</taxon>
        <taxon>Bacillati</taxon>
        <taxon>Bacillota</taxon>
        <taxon>Bacilli</taxon>
        <taxon>Lactobacillales</taxon>
        <taxon>Streptococcaceae</taxon>
        <taxon>Streptococcus</taxon>
    </lineage>
</organism>
<name>PYRF_STRPC</name>
<comment type="function">
    <text evidence="1">Catalyzes the decarboxylation of orotidine 5'-monophosphate (OMP) to uridine 5'-monophosphate (UMP).</text>
</comment>
<comment type="catalytic activity">
    <reaction evidence="1">
        <text>orotidine 5'-phosphate + H(+) = UMP + CO2</text>
        <dbReference type="Rhea" id="RHEA:11596"/>
        <dbReference type="ChEBI" id="CHEBI:15378"/>
        <dbReference type="ChEBI" id="CHEBI:16526"/>
        <dbReference type="ChEBI" id="CHEBI:57538"/>
        <dbReference type="ChEBI" id="CHEBI:57865"/>
        <dbReference type="EC" id="4.1.1.23"/>
    </reaction>
</comment>
<comment type="pathway">
    <text evidence="1">Pyrimidine metabolism; UMP biosynthesis via de novo pathway; UMP from orotate: step 2/2.</text>
</comment>
<comment type="subunit">
    <text evidence="1">Homodimer.</text>
</comment>
<comment type="similarity">
    <text evidence="1">Belongs to the OMP decarboxylase family. Type 1 subfamily.</text>
</comment>
<keyword id="KW-0210">Decarboxylase</keyword>
<keyword id="KW-0456">Lyase</keyword>
<keyword id="KW-0665">Pyrimidine biosynthesis</keyword>
<protein>
    <recommendedName>
        <fullName evidence="1">Orotidine 5'-phosphate decarboxylase</fullName>
        <ecNumber evidence="1">4.1.1.23</ecNumber>
    </recommendedName>
    <alternativeName>
        <fullName evidence="1">OMP decarboxylase</fullName>
        <shortName evidence="1">OMPDCase</shortName>
        <shortName evidence="1">OMPdecase</shortName>
    </alternativeName>
</protein>
<sequence>MKEERPIIALDFSSFEETKAFLDLFPAEEKLYVKIGMELYYAQGPDIVRSIKSLGHNVFLDLKLHDIPNTVRAAMAVLKELDIDMATVHAAGGVEMLKAAREGLGQGPTLIAVTQLTSTSEDQMRGDQNIQTSLLESVLHYSKGAAKAQLDGVVCSAQEVEAIKAVTPTGFTCLTPGIRPKGSNIGDQKRVMTPNQARRIGSDYIVVGRPITQAKDPVAAYQAIKAEWAG</sequence>